<keyword id="KW-1185">Reference proteome</keyword>
<keyword id="KW-0687">Ribonucleoprotein</keyword>
<keyword id="KW-0689">Ribosomal protein</keyword>
<keyword id="KW-0694">RNA-binding</keyword>
<keyword id="KW-0699">rRNA-binding</keyword>
<protein>
    <recommendedName>
        <fullName evidence="1">Small ribosomal subunit protein uS19</fullName>
    </recommendedName>
    <alternativeName>
        <fullName evidence="2">30S ribosomal protein S19</fullName>
    </alternativeName>
</protein>
<dbReference type="EMBL" id="CP000860">
    <property type="protein sequence ID" value="ACA58790.1"/>
    <property type="molecule type" value="Genomic_DNA"/>
</dbReference>
<dbReference type="RefSeq" id="WP_012301382.1">
    <property type="nucleotide sequence ID" value="NC_010424.1"/>
</dbReference>
<dbReference type="SMR" id="B1I1J2"/>
<dbReference type="STRING" id="477974.Daud_0229"/>
<dbReference type="KEGG" id="dau:Daud_0229"/>
<dbReference type="eggNOG" id="COG0185">
    <property type="taxonomic scope" value="Bacteria"/>
</dbReference>
<dbReference type="HOGENOM" id="CLU_144911_0_1_9"/>
<dbReference type="OrthoDB" id="9797833at2"/>
<dbReference type="Proteomes" id="UP000008544">
    <property type="component" value="Chromosome"/>
</dbReference>
<dbReference type="GO" id="GO:0005737">
    <property type="term" value="C:cytoplasm"/>
    <property type="evidence" value="ECO:0007669"/>
    <property type="project" value="UniProtKB-ARBA"/>
</dbReference>
<dbReference type="GO" id="GO:0015935">
    <property type="term" value="C:small ribosomal subunit"/>
    <property type="evidence" value="ECO:0007669"/>
    <property type="project" value="InterPro"/>
</dbReference>
<dbReference type="GO" id="GO:0019843">
    <property type="term" value="F:rRNA binding"/>
    <property type="evidence" value="ECO:0007669"/>
    <property type="project" value="UniProtKB-UniRule"/>
</dbReference>
<dbReference type="GO" id="GO:0003735">
    <property type="term" value="F:structural constituent of ribosome"/>
    <property type="evidence" value="ECO:0007669"/>
    <property type="project" value="InterPro"/>
</dbReference>
<dbReference type="GO" id="GO:0000028">
    <property type="term" value="P:ribosomal small subunit assembly"/>
    <property type="evidence" value="ECO:0007669"/>
    <property type="project" value="TreeGrafter"/>
</dbReference>
<dbReference type="GO" id="GO:0006412">
    <property type="term" value="P:translation"/>
    <property type="evidence" value="ECO:0007669"/>
    <property type="project" value="UniProtKB-UniRule"/>
</dbReference>
<dbReference type="FunFam" id="3.30.860.10:FF:000001">
    <property type="entry name" value="30S ribosomal protein S19"/>
    <property type="match status" value="1"/>
</dbReference>
<dbReference type="Gene3D" id="3.30.860.10">
    <property type="entry name" value="30s Ribosomal Protein S19, Chain A"/>
    <property type="match status" value="1"/>
</dbReference>
<dbReference type="HAMAP" id="MF_00531">
    <property type="entry name" value="Ribosomal_uS19"/>
    <property type="match status" value="1"/>
</dbReference>
<dbReference type="InterPro" id="IPR002222">
    <property type="entry name" value="Ribosomal_uS19"/>
</dbReference>
<dbReference type="InterPro" id="IPR005732">
    <property type="entry name" value="Ribosomal_uS19_bac-type"/>
</dbReference>
<dbReference type="InterPro" id="IPR020934">
    <property type="entry name" value="Ribosomal_uS19_CS"/>
</dbReference>
<dbReference type="InterPro" id="IPR023575">
    <property type="entry name" value="Ribosomal_uS19_SF"/>
</dbReference>
<dbReference type="NCBIfam" id="TIGR01050">
    <property type="entry name" value="rpsS_bact"/>
    <property type="match status" value="1"/>
</dbReference>
<dbReference type="PANTHER" id="PTHR11880">
    <property type="entry name" value="RIBOSOMAL PROTEIN S19P FAMILY MEMBER"/>
    <property type="match status" value="1"/>
</dbReference>
<dbReference type="PANTHER" id="PTHR11880:SF8">
    <property type="entry name" value="SMALL RIBOSOMAL SUBUNIT PROTEIN US19M"/>
    <property type="match status" value="1"/>
</dbReference>
<dbReference type="Pfam" id="PF00203">
    <property type="entry name" value="Ribosomal_S19"/>
    <property type="match status" value="1"/>
</dbReference>
<dbReference type="PIRSF" id="PIRSF002144">
    <property type="entry name" value="Ribosomal_S19"/>
    <property type="match status" value="1"/>
</dbReference>
<dbReference type="PRINTS" id="PR00975">
    <property type="entry name" value="RIBOSOMALS19"/>
</dbReference>
<dbReference type="SUPFAM" id="SSF54570">
    <property type="entry name" value="Ribosomal protein S19"/>
    <property type="match status" value="1"/>
</dbReference>
<dbReference type="PROSITE" id="PS00323">
    <property type="entry name" value="RIBOSOMAL_S19"/>
    <property type="match status" value="1"/>
</dbReference>
<accession>B1I1J2</accession>
<organism>
    <name type="scientific">Desulforudis audaxviator (strain MP104C)</name>
    <dbReference type="NCBI Taxonomy" id="477974"/>
    <lineage>
        <taxon>Bacteria</taxon>
        <taxon>Bacillati</taxon>
        <taxon>Bacillota</taxon>
        <taxon>Clostridia</taxon>
        <taxon>Thermoanaerobacterales</taxon>
        <taxon>Candidatus Desulforudaceae</taxon>
        <taxon>Candidatus Desulforudis</taxon>
    </lineage>
</organism>
<gene>
    <name evidence="1" type="primary">rpsS</name>
    <name type="ordered locus">Daud_0229</name>
</gene>
<proteinExistence type="inferred from homology"/>
<evidence type="ECO:0000255" key="1">
    <source>
        <dbReference type="HAMAP-Rule" id="MF_00531"/>
    </source>
</evidence>
<evidence type="ECO:0000305" key="2"/>
<sequence length="94" mass="10849">MGRSLKKGPYCSPKLLARIEEMNEKDQKRVVKTWSRRSTIFPQMIGHTIAVYDGRKHVPVYVTEEMVGHKLGEFAPTRTYRGHGHHTERSTALK</sequence>
<feature type="chain" id="PRO_1000127963" description="Small ribosomal subunit protein uS19">
    <location>
        <begin position="1"/>
        <end position="94"/>
    </location>
</feature>
<name>RS19_DESAP</name>
<reference key="1">
    <citation type="submission" date="2007-10" db="EMBL/GenBank/DDBJ databases">
        <title>Complete sequence of chromosome of Desulforudis audaxviator MP104C.</title>
        <authorList>
            <person name="Copeland A."/>
            <person name="Lucas S."/>
            <person name="Lapidus A."/>
            <person name="Barry K."/>
            <person name="Glavina del Rio T."/>
            <person name="Dalin E."/>
            <person name="Tice H."/>
            <person name="Bruce D."/>
            <person name="Pitluck S."/>
            <person name="Lowry S.R."/>
            <person name="Larimer F."/>
            <person name="Land M.L."/>
            <person name="Hauser L."/>
            <person name="Kyrpides N."/>
            <person name="Ivanova N.N."/>
            <person name="Richardson P."/>
        </authorList>
    </citation>
    <scope>NUCLEOTIDE SEQUENCE [LARGE SCALE GENOMIC DNA]</scope>
    <source>
        <strain>MP104C</strain>
    </source>
</reference>
<comment type="function">
    <text evidence="1">Protein S19 forms a complex with S13 that binds strongly to the 16S ribosomal RNA.</text>
</comment>
<comment type="similarity">
    <text evidence="1">Belongs to the universal ribosomal protein uS19 family.</text>
</comment>